<protein>
    <recommendedName>
        <fullName>Late expression factor 2</fullName>
    </recommendedName>
</protein>
<feature type="chain" id="PRO_0000132820" description="Late expression factor 2">
    <location>
        <begin position="1"/>
        <end position="216"/>
    </location>
</feature>
<feature type="region of interest" description="Disordered" evidence="2">
    <location>
        <begin position="67"/>
        <end position="88"/>
    </location>
</feature>
<feature type="compositionally biased region" description="Low complexity" evidence="2">
    <location>
        <begin position="71"/>
        <end position="82"/>
    </location>
</feature>
<sequence length="216" mass="24128">MTSSSCPRASLNYRPAMKASDVDPDAEYAVPLEHFDVEVSPYTVFERGGTCVRVSGRRLACLLRNGSRGESAPAPAAAAASAGQPGRKRSCKNVCFKGATSRRELERTLTARVNLPPCMTGLLRQFEIRNRGDRYRKRFVFNCYLINTTTCTACDRRCFVNAAAVLYERDEKCVREMMSLLRREDCYKPPNCSKMSQESLCFKSGACRGTNPLCNF</sequence>
<gene>
    <name type="primary">LEF-2</name>
    <name type="ordered locus">LdOrf-137</name>
</gene>
<accession>P36869</accession>
<accession>Q90118</accession>
<proteinExistence type="inferred from homology"/>
<organismHost>
    <name type="scientific">Lepidoptera</name>
    <name type="common">butterflies and moths</name>
    <dbReference type="NCBI Taxonomy" id="7088"/>
</organismHost>
<evidence type="ECO:0000250" key="1"/>
<evidence type="ECO:0000256" key="2">
    <source>
        <dbReference type="SAM" id="MobiDB-lite"/>
    </source>
</evidence>
<evidence type="ECO:0000305" key="3"/>
<comment type="function">
    <text evidence="1">Required for late and very late gene expression. Specifically required for expression from the vp39 and polh promoters (By similarity).</text>
</comment>
<comment type="similarity">
    <text evidence="3">Belongs to the baculoviridae LEF-2 family.</text>
</comment>
<keyword id="KW-1185">Reference proteome</keyword>
<keyword id="KW-0804">Transcription</keyword>
<keyword id="KW-0805">Transcription regulation</keyword>
<organism>
    <name type="scientific">Lymantria dispar multicapsid nuclear polyhedrosis virus</name>
    <name type="common">LdMNPV</name>
    <dbReference type="NCBI Taxonomy" id="10449"/>
    <lineage>
        <taxon>Viruses</taxon>
        <taxon>Viruses incertae sedis</taxon>
        <taxon>Naldaviricetes</taxon>
        <taxon>Lefavirales</taxon>
        <taxon>Baculoviridae</taxon>
        <taxon>Alphabaculovirus</taxon>
        <taxon>Alphabaculovirus lydisparis</taxon>
    </lineage>
</organism>
<dbReference type="EMBL" id="D37947">
    <property type="protein sequence ID" value="BAA07166.1"/>
    <property type="molecule type" value="Genomic_DNA"/>
</dbReference>
<dbReference type="EMBL" id="AF081810">
    <property type="protein sequence ID" value="AAC70323.1"/>
    <property type="molecule type" value="Genomic_DNA"/>
</dbReference>
<dbReference type="PIR" id="JQ1561">
    <property type="entry name" value="JQ1561"/>
</dbReference>
<dbReference type="PIR" id="T30487">
    <property type="entry name" value="T30487"/>
</dbReference>
<dbReference type="RefSeq" id="NP_047774.1">
    <property type="nucleotide sequence ID" value="NC_001973.1"/>
</dbReference>
<dbReference type="KEGG" id="vg:1488505"/>
<dbReference type="OrthoDB" id="19212at10239"/>
<dbReference type="Proteomes" id="UP000203997">
    <property type="component" value="Genome"/>
</dbReference>
<dbReference type="GO" id="GO:0019079">
    <property type="term" value="P:viral genome replication"/>
    <property type="evidence" value="ECO:0000250"/>
    <property type="project" value="UniProtKB"/>
</dbReference>
<dbReference type="GO" id="GO:0019083">
    <property type="term" value="P:viral transcription"/>
    <property type="evidence" value="ECO:0007669"/>
    <property type="project" value="InterPro"/>
</dbReference>
<dbReference type="InterPro" id="IPR004283">
    <property type="entry name" value="Lef-2"/>
</dbReference>
<dbReference type="Pfam" id="PF03041">
    <property type="entry name" value="Baculo_LEF-2"/>
    <property type="match status" value="1"/>
</dbReference>
<reference key="1">
    <citation type="journal article" date="1992" name="J. Gen. Virol.">
        <title>Nucleotide sequence of the polyhedron envelope protein gene region of the Lymantria dispar nuclear polyhedrosis virus.</title>
        <authorList>
            <person name="Bjoernson R.M."/>
            <person name="Rohrmann G.F."/>
        </authorList>
    </citation>
    <scope>NUCLEOTIDE SEQUENCE [GENOMIC DNA]</scope>
</reference>
<reference key="2">
    <citation type="submission" date="1994-09" db="EMBL/GenBank/DDBJ databases">
        <authorList>
            <person name="Rohrmann G.F."/>
        </authorList>
    </citation>
    <scope>SEQUENCE REVISION</scope>
</reference>
<reference key="3">
    <citation type="journal article" date="1999" name="Virology">
        <title>Sequence and analysis of the genome of a baculovirus pathogenic for Lymantria dispar.</title>
        <authorList>
            <person name="Kuzio J."/>
            <person name="Pearson M.N."/>
            <person name="Harwood S.H."/>
            <person name="Funk C.J."/>
            <person name="Evans J.T."/>
            <person name="Slavicek J.M."/>
            <person name="Rohrmann G.F."/>
        </authorList>
    </citation>
    <scope>NUCLEOTIDE SEQUENCE [LARGE SCALE GENOMIC DNA]</scope>
    <source>
        <strain>Isolate Cl 5-6</strain>
    </source>
</reference>
<name>LEF2_NPVLD</name>